<organism>
    <name type="scientific">Takifugu pardalis</name>
    <name type="common">Panther puffer</name>
    <name type="synonym">Tetraodon pardalis</name>
    <dbReference type="NCBI Taxonomy" id="98921"/>
    <lineage>
        <taxon>Eukaryota</taxon>
        <taxon>Metazoa</taxon>
        <taxon>Chordata</taxon>
        <taxon>Craniata</taxon>
        <taxon>Vertebrata</taxon>
        <taxon>Euteleostomi</taxon>
        <taxon>Actinopterygii</taxon>
        <taxon>Neopterygii</taxon>
        <taxon>Teleostei</taxon>
        <taxon>Neoteleostei</taxon>
        <taxon>Acanthomorphata</taxon>
        <taxon>Eupercaria</taxon>
        <taxon>Tetraodontiformes</taxon>
        <taxon>Tetradontoidea</taxon>
        <taxon>Tetraodontidae</taxon>
        <taxon>Takifugu</taxon>
    </lineage>
</organism>
<proteinExistence type="evidence at protein level"/>
<sequence>MGAVPGVVLLLMLAVLGIRAAPAPEECHKLTKPVLKADVQNVSGDWVLVWSVANTTERWICENLTSSYVEFKLHSDIIEYTERNLFLGNSCISFYSNLSASTEKQQQFSLNNLQMEEKGVVRPFNDNGTVKFFETCVDCLSMEYSGDIGRFLLIYRRDGVHQNVEVLKAARDESQKLAECLGFSIDEPFIYDGVSDFCHKKSPEECHKLTKPVTKADVQSVSGDWVLVWSVAENISTSNEWTKLKSSHVELRIHSGVIVLNERNMLKNNSCMTFKTNMTAGPESQNTFIYTSGKMEENGVDKELDENGTVKFFETCADCLSIDYSGLFGHVLFVYRRDGVHQNVEVLKAAQDESQKLAECLGFSIGEPFIYDGVSDFCHKKSSPEVKPEQD</sequence>
<name>SXT2_TAKPA</name>
<comment type="function">
    <text evidence="2">Binds both saxitoxin and tetradotoxin. May play a role in toxin accumulation and/or excretion.</text>
</comment>
<comment type="subunit">
    <text evidence="2">Homodimer or heterodimer of PSTBP1 and PSTBP2.</text>
</comment>
<comment type="subcellular location">
    <subcellularLocation>
        <location>Secreted</location>
    </subcellularLocation>
</comment>
<comment type="PTM">
    <text evidence="2">Glycosylated.</text>
</comment>
<gene>
    <name type="primary">psbp2</name>
    <name type="synonym">pstbp2</name>
</gene>
<feature type="signal peptide" evidence="2">
    <location>
        <begin position="1"/>
        <end position="20"/>
    </location>
</feature>
<feature type="chain" id="PRO_0000022460" description="Saxitoxin and tetrodotoxin-binding protein 2">
    <location>
        <begin position="21"/>
        <end position="391"/>
    </location>
</feature>
<feature type="repeat" description="1">
    <location>
        <begin position="24"/>
        <end position="202"/>
    </location>
</feature>
<feature type="repeat" description="2">
    <location>
        <begin position="203"/>
        <end position="391"/>
    </location>
</feature>
<feature type="glycosylation site" description="N-linked (GlcNAc...) asparagine" evidence="1">
    <location>
        <position position="41"/>
    </location>
</feature>
<feature type="glycosylation site" description="N-linked (GlcNAc...) asparagine" evidence="1">
    <location>
        <position position="54"/>
    </location>
</feature>
<feature type="glycosylation site" description="N-linked (GlcNAc...) asparagine" evidence="1">
    <location>
        <position position="63"/>
    </location>
</feature>
<feature type="glycosylation site" description="N-linked (GlcNAc...) asparagine" evidence="1">
    <location>
        <position position="97"/>
    </location>
</feature>
<feature type="glycosylation site" description="N-linked (GlcNAc...) asparagine" evidence="1">
    <location>
        <position position="234"/>
    </location>
</feature>
<feature type="glycosylation site" description="N-linked (GlcNAc...) asparagine" evidence="1">
    <location>
        <position position="268"/>
    </location>
</feature>
<feature type="glycosylation site" description="N-linked (GlcNAc...) asparagine" evidence="1">
    <location>
        <position position="277"/>
    </location>
</feature>
<feature type="glycosylation site" description="N-linked (GlcNAc...) asparagine" evidence="1">
    <location>
        <position position="307"/>
    </location>
</feature>
<reference key="1">
    <citation type="journal article" date="2001" name="Eur. J. Biochem.">
        <title>Purification, characterization, and cDNA cloning of a novel soluble saxitoxin and tetrodotoxin binding protein from plasma of the puffer fish, Fugu pardalis.</title>
        <authorList>
            <person name="Yotsu-Yamashita M."/>
            <person name="Sugimoto A."/>
            <person name="Terakawa T."/>
            <person name="Shoji Y."/>
            <person name="Miyazawa T."/>
            <person name="Yasumoto T."/>
        </authorList>
    </citation>
    <scope>NUCLEOTIDE SEQUENCE [MRNA]</scope>
    <scope>PROTEIN SEQUENCE OF 21-44 AND 116-140</scope>
    <scope>FUNCTION</scope>
    <scope>SUBUNIT</scope>
    <scope>GLYCOSYLATION</scope>
    <source>
        <tissue>Liver</tissue>
    </source>
</reference>
<evidence type="ECO:0000255" key="1"/>
<evidence type="ECO:0000269" key="2">
    <source>
    </source>
</evidence>
<keyword id="KW-0903">Direct protein sequencing</keyword>
<keyword id="KW-0325">Glycoprotein</keyword>
<keyword id="KW-0677">Repeat</keyword>
<keyword id="KW-0964">Secreted</keyword>
<keyword id="KW-0732">Signal</keyword>
<dbReference type="EMBL" id="AB037569">
    <property type="protein sequence ID" value="BAB55583.1"/>
    <property type="molecule type" value="mRNA"/>
</dbReference>
<dbReference type="SMR" id="Q90WJ9"/>
<dbReference type="GlyCosmos" id="Q90WJ9">
    <property type="glycosylation" value="8 sites, No reported glycans"/>
</dbReference>
<dbReference type="GO" id="GO:0005576">
    <property type="term" value="C:extracellular region"/>
    <property type="evidence" value="ECO:0007669"/>
    <property type="project" value="UniProtKB-SubCell"/>
</dbReference>
<dbReference type="CDD" id="cd19415">
    <property type="entry name" value="lipocalin_ApoM_AGP"/>
    <property type="match status" value="1"/>
</dbReference>
<dbReference type="FunFam" id="2.40.128.20:FF:000035">
    <property type="entry name" value="Pufferfish saxitoxin and tetrodotoxin binding protein type 2_1"/>
    <property type="match status" value="1"/>
</dbReference>
<dbReference type="Gene3D" id="2.40.128.20">
    <property type="match status" value="2"/>
</dbReference>
<dbReference type="InterPro" id="IPR012674">
    <property type="entry name" value="Calycin"/>
</dbReference>
<dbReference type="PANTHER" id="PTHR11967">
    <property type="entry name" value="ALPHA-1-ACID GLYCOPROTEIN"/>
    <property type="match status" value="1"/>
</dbReference>
<dbReference type="PANTHER" id="PTHR11967:SF2">
    <property type="entry name" value="ALPHA-1-ACID GLYCOPROTEIN 1"/>
    <property type="match status" value="1"/>
</dbReference>
<protein>
    <recommendedName>
        <fullName>Saxitoxin and tetrodotoxin-binding protein 2</fullName>
    </recommendedName>
</protein>
<accession>Q90WJ9</accession>